<keyword id="KW-0963">Cytoplasm</keyword>
<keyword id="KW-0227">DNA damage</keyword>
<keyword id="KW-0234">DNA repair</keyword>
<keyword id="KW-0378">Hydrolase</keyword>
<keyword id="KW-1185">Reference proteome</keyword>
<evidence type="ECO:0000255" key="1">
    <source>
        <dbReference type="HAMAP-Rule" id="MF_00148"/>
    </source>
</evidence>
<reference key="1">
    <citation type="submission" date="2003-06" db="EMBL/GenBank/DDBJ databases">
        <title>The complete genome sequence of Haemophilus ducreyi.</title>
        <authorList>
            <person name="Munson R.S. Jr."/>
            <person name="Ray W.C."/>
            <person name="Mahairas G."/>
            <person name="Sabo P."/>
            <person name="Mungur R."/>
            <person name="Johnson L."/>
            <person name="Nguyen D."/>
            <person name="Wang J."/>
            <person name="Forst C."/>
            <person name="Hood L."/>
        </authorList>
    </citation>
    <scope>NUCLEOTIDE SEQUENCE [LARGE SCALE GENOMIC DNA]</scope>
    <source>
        <strain>35000HP / ATCC 700724</strain>
    </source>
</reference>
<proteinExistence type="inferred from homology"/>
<organism>
    <name type="scientific">Haemophilus ducreyi (strain 35000HP / ATCC 700724)</name>
    <dbReference type="NCBI Taxonomy" id="233412"/>
    <lineage>
        <taxon>Bacteria</taxon>
        <taxon>Pseudomonadati</taxon>
        <taxon>Pseudomonadota</taxon>
        <taxon>Gammaproteobacteria</taxon>
        <taxon>Pasteurellales</taxon>
        <taxon>Pasteurellaceae</taxon>
        <taxon>Haemophilus</taxon>
    </lineage>
</organism>
<sequence length="223" mass="24871">MNSWTEAIGEEKVQPYFQQLLQQVYQARASGKIIYPPQHEVFSAFALTDFKAVKVVILGQDPYHGPNQAHGLAFSVKPSVVPPPSLVNIYKELAQDIAGFQVPSHGYLIDWAKQGVLLLNTVLTVQQGMAHSHATLGWEIFTDKVIAQLNDHRENLVFLLWGSHAQKKGQFINRSRHCVLTAPHPSPLSAHRGFFGCQHFSKANAYLQSKGIATINWQLPLVV</sequence>
<comment type="function">
    <text evidence="1">Excises uracil residues from the DNA which can arise as a result of misincorporation of dUMP residues by DNA polymerase or due to deamination of cytosine.</text>
</comment>
<comment type="catalytic activity">
    <reaction evidence="1">
        <text>Hydrolyzes single-stranded DNA or mismatched double-stranded DNA and polynucleotides, releasing free uracil.</text>
        <dbReference type="EC" id="3.2.2.27"/>
    </reaction>
</comment>
<comment type="subcellular location">
    <subcellularLocation>
        <location evidence="1">Cytoplasm</location>
    </subcellularLocation>
</comment>
<comment type="similarity">
    <text evidence="1">Belongs to the uracil-DNA glycosylase (UDG) superfamily. UNG family.</text>
</comment>
<name>UNG_HAEDU</name>
<gene>
    <name evidence="1" type="primary">ung</name>
    <name type="ordered locus">HD_1066</name>
</gene>
<feature type="chain" id="PRO_0000176099" description="Uracil-DNA glycosylase">
    <location>
        <begin position="1"/>
        <end position="223"/>
    </location>
</feature>
<feature type="active site" description="Proton acceptor" evidence="1">
    <location>
        <position position="61"/>
    </location>
</feature>
<accession>Q7VMC0</accession>
<protein>
    <recommendedName>
        <fullName evidence="1">Uracil-DNA glycosylase</fullName>
        <shortName evidence="1">UDG</shortName>
        <ecNumber evidence="1">3.2.2.27</ecNumber>
    </recommendedName>
</protein>
<dbReference type="EC" id="3.2.2.27" evidence="1"/>
<dbReference type="EMBL" id="AE017143">
    <property type="protein sequence ID" value="AAP95937.1"/>
    <property type="molecule type" value="Genomic_DNA"/>
</dbReference>
<dbReference type="RefSeq" id="WP_010944986.1">
    <property type="nucleotide sequence ID" value="NC_002940.2"/>
</dbReference>
<dbReference type="SMR" id="Q7VMC0"/>
<dbReference type="STRING" id="233412.HD_1066"/>
<dbReference type="KEGG" id="hdu:HD_1066"/>
<dbReference type="eggNOG" id="COG0692">
    <property type="taxonomic scope" value="Bacteria"/>
</dbReference>
<dbReference type="HOGENOM" id="CLU_032162_3_0_6"/>
<dbReference type="OrthoDB" id="9804372at2"/>
<dbReference type="Proteomes" id="UP000001022">
    <property type="component" value="Chromosome"/>
</dbReference>
<dbReference type="GO" id="GO:0005737">
    <property type="term" value="C:cytoplasm"/>
    <property type="evidence" value="ECO:0007669"/>
    <property type="project" value="UniProtKB-SubCell"/>
</dbReference>
<dbReference type="GO" id="GO:0004844">
    <property type="term" value="F:uracil DNA N-glycosylase activity"/>
    <property type="evidence" value="ECO:0007669"/>
    <property type="project" value="UniProtKB-UniRule"/>
</dbReference>
<dbReference type="GO" id="GO:0097510">
    <property type="term" value="P:base-excision repair, AP site formation via deaminated base removal"/>
    <property type="evidence" value="ECO:0007669"/>
    <property type="project" value="TreeGrafter"/>
</dbReference>
<dbReference type="CDD" id="cd10027">
    <property type="entry name" value="UDG-F1-like"/>
    <property type="match status" value="1"/>
</dbReference>
<dbReference type="FunFam" id="3.40.470.10:FF:000001">
    <property type="entry name" value="Uracil-DNA glycosylase"/>
    <property type="match status" value="1"/>
</dbReference>
<dbReference type="Gene3D" id="3.40.470.10">
    <property type="entry name" value="Uracil-DNA glycosylase-like domain"/>
    <property type="match status" value="1"/>
</dbReference>
<dbReference type="HAMAP" id="MF_00148">
    <property type="entry name" value="UDG"/>
    <property type="match status" value="1"/>
</dbReference>
<dbReference type="InterPro" id="IPR002043">
    <property type="entry name" value="UDG_fam1"/>
</dbReference>
<dbReference type="InterPro" id="IPR018085">
    <property type="entry name" value="Ura-DNA_Glyclase_AS"/>
</dbReference>
<dbReference type="InterPro" id="IPR005122">
    <property type="entry name" value="Uracil-DNA_glycosylase-like"/>
</dbReference>
<dbReference type="InterPro" id="IPR036895">
    <property type="entry name" value="Uracil-DNA_glycosylase-like_sf"/>
</dbReference>
<dbReference type="NCBIfam" id="NF003588">
    <property type="entry name" value="PRK05254.1-1"/>
    <property type="match status" value="1"/>
</dbReference>
<dbReference type="NCBIfam" id="NF003589">
    <property type="entry name" value="PRK05254.1-2"/>
    <property type="match status" value="1"/>
</dbReference>
<dbReference type="NCBIfam" id="NF003591">
    <property type="entry name" value="PRK05254.1-4"/>
    <property type="match status" value="1"/>
</dbReference>
<dbReference type="NCBIfam" id="NF003592">
    <property type="entry name" value="PRK05254.1-5"/>
    <property type="match status" value="1"/>
</dbReference>
<dbReference type="NCBIfam" id="TIGR00628">
    <property type="entry name" value="ung"/>
    <property type="match status" value="1"/>
</dbReference>
<dbReference type="PANTHER" id="PTHR11264">
    <property type="entry name" value="URACIL-DNA GLYCOSYLASE"/>
    <property type="match status" value="1"/>
</dbReference>
<dbReference type="PANTHER" id="PTHR11264:SF0">
    <property type="entry name" value="URACIL-DNA GLYCOSYLASE"/>
    <property type="match status" value="1"/>
</dbReference>
<dbReference type="Pfam" id="PF03167">
    <property type="entry name" value="UDG"/>
    <property type="match status" value="1"/>
</dbReference>
<dbReference type="SMART" id="SM00986">
    <property type="entry name" value="UDG"/>
    <property type="match status" value="1"/>
</dbReference>
<dbReference type="SMART" id="SM00987">
    <property type="entry name" value="UreE_C"/>
    <property type="match status" value="1"/>
</dbReference>
<dbReference type="SUPFAM" id="SSF52141">
    <property type="entry name" value="Uracil-DNA glycosylase-like"/>
    <property type="match status" value="1"/>
</dbReference>
<dbReference type="PROSITE" id="PS00130">
    <property type="entry name" value="U_DNA_GLYCOSYLASE"/>
    <property type="match status" value="1"/>
</dbReference>